<sequence>MSAGKIIQIIGAVIDVEFPQNAVPKVYDALKVESGLTLEVQQQLGGGVVRCIALGSSDGLKRGLKVENTGNPISVPVGTKTLGRIMNVLGEPIDEKGEIGAEEYWAIHRAAPSYEEQSNSTELLETGIKVIDLICPFAKGGKVGLFGGAGVGKTVNMMELIRNIAIEHSGYSVFAGVGERTREGNDFYHEMTESNVLDKVSLVYGQMNEPPGNRLRVALTGLTMAEKFRDEGRDVLFFVDNIYRYTLAGTEVSALLGRMPSAVGYQPTLAEEMGVLQERITSTKTGSITSVQAVYVPADDLTDPSPATTFAHLDSTVVLSRNIASLGIYPAVDPLDSTSRQLDPLVVGQEHYDVARGVQGILQRYKELKDIIAILGMDELSEDDKLVVARARKIERFLSQPFFVAEVFTGSPGKYVSLKDTIRGFKGILDGEYDHIPEQAFYMVGSIEEVLEKAKKM</sequence>
<dbReference type="EC" id="7.1.2.2" evidence="1"/>
<dbReference type="EMBL" id="CP000947">
    <property type="protein sequence ID" value="ACA31639.1"/>
    <property type="molecule type" value="Genomic_DNA"/>
</dbReference>
<dbReference type="RefSeq" id="WP_012340942.1">
    <property type="nucleotide sequence ID" value="NC_010519.1"/>
</dbReference>
<dbReference type="SMR" id="B0UWG5"/>
<dbReference type="STRING" id="228400.HSM_1850"/>
<dbReference type="GeneID" id="31488157"/>
<dbReference type="KEGG" id="hsm:HSM_1850"/>
<dbReference type="HOGENOM" id="CLU_022398_0_2_6"/>
<dbReference type="GO" id="GO:0005886">
    <property type="term" value="C:plasma membrane"/>
    <property type="evidence" value="ECO:0007669"/>
    <property type="project" value="UniProtKB-SubCell"/>
</dbReference>
<dbReference type="GO" id="GO:0045259">
    <property type="term" value="C:proton-transporting ATP synthase complex"/>
    <property type="evidence" value="ECO:0007669"/>
    <property type="project" value="UniProtKB-KW"/>
</dbReference>
<dbReference type="GO" id="GO:0005524">
    <property type="term" value="F:ATP binding"/>
    <property type="evidence" value="ECO:0007669"/>
    <property type="project" value="UniProtKB-UniRule"/>
</dbReference>
<dbReference type="GO" id="GO:0016887">
    <property type="term" value="F:ATP hydrolysis activity"/>
    <property type="evidence" value="ECO:0007669"/>
    <property type="project" value="InterPro"/>
</dbReference>
<dbReference type="GO" id="GO:0046933">
    <property type="term" value="F:proton-transporting ATP synthase activity, rotational mechanism"/>
    <property type="evidence" value="ECO:0007669"/>
    <property type="project" value="UniProtKB-UniRule"/>
</dbReference>
<dbReference type="CDD" id="cd18110">
    <property type="entry name" value="ATP-synt_F1_beta_C"/>
    <property type="match status" value="1"/>
</dbReference>
<dbReference type="CDD" id="cd18115">
    <property type="entry name" value="ATP-synt_F1_beta_N"/>
    <property type="match status" value="1"/>
</dbReference>
<dbReference type="CDD" id="cd01133">
    <property type="entry name" value="F1-ATPase_beta_CD"/>
    <property type="match status" value="1"/>
</dbReference>
<dbReference type="FunFam" id="1.10.1140.10:FF:000001">
    <property type="entry name" value="ATP synthase subunit beta"/>
    <property type="match status" value="1"/>
</dbReference>
<dbReference type="FunFam" id="2.40.10.170:FF:000003">
    <property type="entry name" value="ATP synthase subunit beta"/>
    <property type="match status" value="1"/>
</dbReference>
<dbReference type="FunFam" id="3.40.50.300:FF:000004">
    <property type="entry name" value="ATP synthase subunit beta"/>
    <property type="match status" value="1"/>
</dbReference>
<dbReference type="Gene3D" id="2.40.10.170">
    <property type="match status" value="1"/>
</dbReference>
<dbReference type="Gene3D" id="1.10.1140.10">
    <property type="entry name" value="Bovine Mitochondrial F1-atpase, Atp Synthase Beta Chain, Chain D, domain 3"/>
    <property type="match status" value="1"/>
</dbReference>
<dbReference type="Gene3D" id="3.40.50.300">
    <property type="entry name" value="P-loop containing nucleotide triphosphate hydrolases"/>
    <property type="match status" value="1"/>
</dbReference>
<dbReference type="HAMAP" id="MF_01347">
    <property type="entry name" value="ATP_synth_beta_bact"/>
    <property type="match status" value="1"/>
</dbReference>
<dbReference type="InterPro" id="IPR003593">
    <property type="entry name" value="AAA+_ATPase"/>
</dbReference>
<dbReference type="InterPro" id="IPR055190">
    <property type="entry name" value="ATP-synt_VA_C"/>
</dbReference>
<dbReference type="InterPro" id="IPR005722">
    <property type="entry name" value="ATP_synth_F1_bsu"/>
</dbReference>
<dbReference type="InterPro" id="IPR020003">
    <property type="entry name" value="ATPase_a/bsu_AS"/>
</dbReference>
<dbReference type="InterPro" id="IPR050053">
    <property type="entry name" value="ATPase_alpha/beta_chains"/>
</dbReference>
<dbReference type="InterPro" id="IPR004100">
    <property type="entry name" value="ATPase_F1/V1/A1_a/bsu_N"/>
</dbReference>
<dbReference type="InterPro" id="IPR036121">
    <property type="entry name" value="ATPase_F1/V1/A1_a/bsu_N_sf"/>
</dbReference>
<dbReference type="InterPro" id="IPR000194">
    <property type="entry name" value="ATPase_F1/V1/A1_a/bsu_nucl-bd"/>
</dbReference>
<dbReference type="InterPro" id="IPR024034">
    <property type="entry name" value="ATPase_F1/V1_b/a_C"/>
</dbReference>
<dbReference type="InterPro" id="IPR027417">
    <property type="entry name" value="P-loop_NTPase"/>
</dbReference>
<dbReference type="NCBIfam" id="TIGR01039">
    <property type="entry name" value="atpD"/>
    <property type="match status" value="1"/>
</dbReference>
<dbReference type="PANTHER" id="PTHR15184">
    <property type="entry name" value="ATP SYNTHASE"/>
    <property type="match status" value="1"/>
</dbReference>
<dbReference type="PANTHER" id="PTHR15184:SF71">
    <property type="entry name" value="ATP SYNTHASE SUBUNIT BETA, MITOCHONDRIAL"/>
    <property type="match status" value="1"/>
</dbReference>
<dbReference type="Pfam" id="PF00006">
    <property type="entry name" value="ATP-synt_ab"/>
    <property type="match status" value="1"/>
</dbReference>
<dbReference type="Pfam" id="PF02874">
    <property type="entry name" value="ATP-synt_ab_N"/>
    <property type="match status" value="1"/>
</dbReference>
<dbReference type="Pfam" id="PF22919">
    <property type="entry name" value="ATP-synt_VA_C"/>
    <property type="match status" value="1"/>
</dbReference>
<dbReference type="SMART" id="SM00382">
    <property type="entry name" value="AAA"/>
    <property type="match status" value="1"/>
</dbReference>
<dbReference type="SUPFAM" id="SSF47917">
    <property type="entry name" value="C-terminal domain of alpha and beta subunits of F1 ATP synthase"/>
    <property type="match status" value="1"/>
</dbReference>
<dbReference type="SUPFAM" id="SSF50615">
    <property type="entry name" value="N-terminal domain of alpha and beta subunits of F1 ATP synthase"/>
    <property type="match status" value="1"/>
</dbReference>
<dbReference type="SUPFAM" id="SSF52540">
    <property type="entry name" value="P-loop containing nucleoside triphosphate hydrolases"/>
    <property type="match status" value="1"/>
</dbReference>
<dbReference type="PROSITE" id="PS00152">
    <property type="entry name" value="ATPASE_ALPHA_BETA"/>
    <property type="match status" value="1"/>
</dbReference>
<comment type="function">
    <text evidence="1">Produces ATP from ADP in the presence of a proton gradient across the membrane. The catalytic sites are hosted primarily by the beta subunits.</text>
</comment>
<comment type="catalytic activity">
    <reaction evidence="1">
        <text>ATP + H2O + 4 H(+)(in) = ADP + phosphate + 5 H(+)(out)</text>
        <dbReference type="Rhea" id="RHEA:57720"/>
        <dbReference type="ChEBI" id="CHEBI:15377"/>
        <dbReference type="ChEBI" id="CHEBI:15378"/>
        <dbReference type="ChEBI" id="CHEBI:30616"/>
        <dbReference type="ChEBI" id="CHEBI:43474"/>
        <dbReference type="ChEBI" id="CHEBI:456216"/>
        <dbReference type="EC" id="7.1.2.2"/>
    </reaction>
</comment>
<comment type="subunit">
    <text evidence="1">F-type ATPases have 2 components, CF(1) - the catalytic core - and CF(0) - the membrane proton channel. CF(1) has five subunits: alpha(3), beta(3), gamma(1), delta(1), epsilon(1). CF(0) has three main subunits: a(1), b(2) and c(9-12). The alpha and beta chains form an alternating ring which encloses part of the gamma chain. CF(1) is attached to CF(0) by a central stalk formed by the gamma and epsilon chains, while a peripheral stalk is formed by the delta and b chains.</text>
</comment>
<comment type="subcellular location">
    <subcellularLocation>
        <location evidence="1">Cell inner membrane</location>
        <topology evidence="1">Peripheral membrane protein</topology>
    </subcellularLocation>
</comment>
<comment type="similarity">
    <text evidence="1">Belongs to the ATPase alpha/beta chains family.</text>
</comment>
<protein>
    <recommendedName>
        <fullName evidence="1">ATP synthase subunit beta</fullName>
        <ecNumber evidence="1">7.1.2.2</ecNumber>
    </recommendedName>
    <alternativeName>
        <fullName evidence="1">ATP synthase F1 sector subunit beta</fullName>
    </alternativeName>
    <alternativeName>
        <fullName evidence="1">F-ATPase subunit beta</fullName>
    </alternativeName>
</protein>
<evidence type="ECO:0000255" key="1">
    <source>
        <dbReference type="HAMAP-Rule" id="MF_01347"/>
    </source>
</evidence>
<reference key="1">
    <citation type="submission" date="2008-02" db="EMBL/GenBank/DDBJ databases">
        <title>Complete sequence of Haemophilus somnus 2336.</title>
        <authorList>
            <consortium name="US DOE Joint Genome Institute"/>
            <person name="Siddaramappa S."/>
            <person name="Duncan A.J."/>
            <person name="Challacombe J.F."/>
            <person name="Rainey D."/>
            <person name="Gillaspy A.F."/>
            <person name="Carson M."/>
            <person name="Gipson J."/>
            <person name="Gipson M."/>
            <person name="Bruce D."/>
            <person name="Detter J.C."/>
            <person name="Han C.S."/>
            <person name="Land M."/>
            <person name="Tapia R."/>
            <person name="Thompson L.S."/>
            <person name="Orvis J."/>
            <person name="Zaitshik J."/>
            <person name="Barnes G."/>
            <person name="Brettin T.S."/>
            <person name="Dyer D.W."/>
            <person name="Inzana T.J."/>
        </authorList>
    </citation>
    <scope>NUCLEOTIDE SEQUENCE [LARGE SCALE GENOMIC DNA]</scope>
    <source>
        <strain>2336</strain>
    </source>
</reference>
<feature type="chain" id="PRO_1000143513" description="ATP synthase subunit beta">
    <location>
        <begin position="1"/>
        <end position="457"/>
    </location>
</feature>
<feature type="binding site" evidence="1">
    <location>
        <begin position="147"/>
        <end position="154"/>
    </location>
    <ligand>
        <name>ATP</name>
        <dbReference type="ChEBI" id="CHEBI:30616"/>
    </ligand>
</feature>
<proteinExistence type="inferred from homology"/>
<gene>
    <name evidence="1" type="primary">atpD</name>
    <name type="ordered locus">HSM_1850</name>
</gene>
<name>ATPB_HISS2</name>
<keyword id="KW-0066">ATP synthesis</keyword>
<keyword id="KW-0067">ATP-binding</keyword>
<keyword id="KW-0997">Cell inner membrane</keyword>
<keyword id="KW-1003">Cell membrane</keyword>
<keyword id="KW-0139">CF(1)</keyword>
<keyword id="KW-0375">Hydrogen ion transport</keyword>
<keyword id="KW-0406">Ion transport</keyword>
<keyword id="KW-0472">Membrane</keyword>
<keyword id="KW-0547">Nucleotide-binding</keyword>
<keyword id="KW-1278">Translocase</keyword>
<keyword id="KW-0813">Transport</keyword>
<organism>
    <name type="scientific">Histophilus somni (strain 2336)</name>
    <name type="common">Haemophilus somnus</name>
    <dbReference type="NCBI Taxonomy" id="228400"/>
    <lineage>
        <taxon>Bacteria</taxon>
        <taxon>Pseudomonadati</taxon>
        <taxon>Pseudomonadota</taxon>
        <taxon>Gammaproteobacteria</taxon>
        <taxon>Pasteurellales</taxon>
        <taxon>Pasteurellaceae</taxon>
        <taxon>Histophilus</taxon>
    </lineage>
</organism>
<accession>B0UWG5</accession>